<organism>
    <name type="scientific">Capsicum chinense</name>
    <name type="common">Scotch bonnet</name>
    <name type="synonym">Bonnet pepper</name>
    <dbReference type="NCBI Taxonomy" id="80379"/>
    <lineage>
        <taxon>Eukaryota</taxon>
        <taxon>Viridiplantae</taxon>
        <taxon>Streptophyta</taxon>
        <taxon>Embryophyta</taxon>
        <taxon>Tracheophyta</taxon>
        <taxon>Spermatophyta</taxon>
        <taxon>Magnoliopsida</taxon>
        <taxon>eudicotyledons</taxon>
        <taxon>Gunneridae</taxon>
        <taxon>Pentapetalae</taxon>
        <taxon>asterids</taxon>
        <taxon>lamiids</taxon>
        <taxon>Solanales</taxon>
        <taxon>Solanaceae</taxon>
        <taxon>Solanoideae</taxon>
        <taxon>Capsiceae</taxon>
        <taxon>Capsicum</taxon>
    </lineage>
</organism>
<protein>
    <recommendedName>
        <fullName evidence="1">Endochitinase 2</fullName>
        <ecNumber>3.2.1.14</ecNumber>
    </recommendedName>
</protein>
<accession>P86082</accession>
<dbReference type="EC" id="3.2.1.14"/>
<dbReference type="SMR" id="P86082"/>
<dbReference type="GO" id="GO:0008843">
    <property type="term" value="F:endochitinase activity"/>
    <property type="evidence" value="ECO:0007669"/>
    <property type="project" value="UniProtKB-EC"/>
</dbReference>
<dbReference type="GO" id="GO:0006032">
    <property type="term" value="P:chitin catabolic process"/>
    <property type="evidence" value="ECO:0007669"/>
    <property type="project" value="UniProtKB-KW"/>
</dbReference>
<dbReference type="GO" id="GO:0006952">
    <property type="term" value="P:defense response"/>
    <property type="evidence" value="ECO:0007669"/>
    <property type="project" value="UniProtKB-KW"/>
</dbReference>
<dbReference type="GO" id="GO:0000272">
    <property type="term" value="P:polysaccharide catabolic process"/>
    <property type="evidence" value="ECO:0007669"/>
    <property type="project" value="UniProtKB-KW"/>
</dbReference>
<dbReference type="Gene3D" id="3.30.20.10">
    <property type="entry name" value="Endochitinase, domain 2"/>
    <property type="match status" value="1"/>
</dbReference>
<dbReference type="InterPro" id="IPR023346">
    <property type="entry name" value="Lysozyme-like_dom_sf"/>
</dbReference>
<dbReference type="SUPFAM" id="SSF53955">
    <property type="entry name" value="Lysozyme-like"/>
    <property type="match status" value="1"/>
</dbReference>
<proteinExistence type="evidence at protein level"/>
<sequence length="35" mass="3765">GPIQISYNYNYGPCGRYCGILGVSPGDNLDCGNQR</sequence>
<name>CHI2_CAPCH</name>
<reference evidence="3" key="1">
    <citation type="submission" date="2008-07" db="UniProtKB">
        <authorList>
            <person name="Sabater Jara A.B."/>
            <person name="Almagro L."/>
            <person name="Pedreno M.A."/>
        </authorList>
    </citation>
    <scope>PROTEIN SEQUENCE</scope>
</reference>
<keyword id="KW-0119">Carbohydrate metabolism</keyword>
<keyword id="KW-0146">Chitin degradation</keyword>
<keyword id="KW-0903">Direct protein sequencing</keyword>
<keyword id="KW-0326">Glycosidase</keyword>
<keyword id="KW-0378">Hydrolase</keyword>
<keyword id="KW-0379">Hydroxylation</keyword>
<keyword id="KW-0611">Plant defense</keyword>
<keyword id="KW-0624">Polysaccharide degradation</keyword>
<evidence type="ECO:0000250" key="1">
    <source>
        <dbReference type="UniProtKB" id="P24091"/>
    </source>
</evidence>
<evidence type="ECO:0000255" key="2"/>
<evidence type="ECO:0000305" key="3"/>
<comment type="function">
    <text evidence="3">Defense against chitin-containing fungal pathogens.</text>
</comment>
<comment type="catalytic activity">
    <reaction evidence="1">
        <text>Random endo-hydrolysis of N-acetyl-beta-D-glucosaminide (1-&gt;4)-beta-linkages in chitin and chitodextrins.</text>
        <dbReference type="EC" id="3.2.1.14"/>
    </reaction>
</comment>
<comment type="similarity">
    <text evidence="2">Belongs to the glycosyl hydrolase 19 family. Chitinase class I subfamily.</text>
</comment>
<feature type="chain" id="PRO_0000362990" description="Endochitinase 2">
    <location>
        <begin position="1" status="less than"/>
        <end position="35" status="greater than"/>
    </location>
</feature>
<feature type="unsure residue" description="I or L">
    <location>
        <position position="3"/>
    </location>
</feature>
<feature type="unsure residue" description="Q or K">
    <location>
        <position position="4"/>
    </location>
</feature>
<feature type="unsure residue" description="I or L">
    <location>
        <position position="5"/>
    </location>
</feature>
<feature type="unsure residue" description="I or L">
    <location>
        <position position="20"/>
    </location>
</feature>
<feature type="unsure residue" description="L or I">
    <location>
        <position position="21"/>
    </location>
</feature>
<feature type="unsure residue" description="L or I">
    <location>
        <position position="29"/>
    </location>
</feature>
<feature type="unsure residue" description="Q or K">
    <location>
        <position position="34"/>
    </location>
</feature>
<feature type="non-consecutive residues" evidence="3">
    <location>
        <begin position="16"/>
        <end position="17"/>
    </location>
</feature>
<feature type="non-terminal residue">
    <location>
        <position position="1"/>
    </location>
</feature>
<feature type="non-terminal residue">
    <location>
        <position position="35"/>
    </location>
</feature>